<feature type="chain" id="PRO_1000195431" description="Serine hydroxymethyltransferase">
    <location>
        <begin position="1"/>
        <end position="413"/>
    </location>
</feature>
<feature type="binding site" evidence="1">
    <location>
        <position position="117"/>
    </location>
    <ligand>
        <name>(6S)-5,6,7,8-tetrahydrofolate</name>
        <dbReference type="ChEBI" id="CHEBI:57453"/>
    </ligand>
</feature>
<feature type="binding site" evidence="1">
    <location>
        <begin position="121"/>
        <end position="123"/>
    </location>
    <ligand>
        <name>(6S)-5,6,7,8-tetrahydrofolate</name>
        <dbReference type="ChEBI" id="CHEBI:57453"/>
    </ligand>
</feature>
<feature type="binding site" evidence="1">
    <location>
        <position position="239"/>
    </location>
    <ligand>
        <name>(6S)-5,6,7,8-tetrahydrofolate</name>
        <dbReference type="ChEBI" id="CHEBI:57453"/>
    </ligand>
</feature>
<feature type="binding site" evidence="1">
    <location>
        <begin position="349"/>
        <end position="351"/>
    </location>
    <ligand>
        <name>(6S)-5,6,7,8-tetrahydrofolate</name>
        <dbReference type="ChEBI" id="CHEBI:57453"/>
    </ligand>
</feature>
<feature type="site" description="Plays an important role in substrate specificity" evidence="1">
    <location>
        <position position="225"/>
    </location>
</feature>
<feature type="modified residue" description="N6-(pyridoxal phosphate)lysine" evidence="1">
    <location>
        <position position="226"/>
    </location>
</feature>
<organism>
    <name type="scientific">Bacillus cereus (strain 03BB102)</name>
    <dbReference type="NCBI Taxonomy" id="572264"/>
    <lineage>
        <taxon>Bacteria</taxon>
        <taxon>Bacillati</taxon>
        <taxon>Bacillota</taxon>
        <taxon>Bacilli</taxon>
        <taxon>Bacillales</taxon>
        <taxon>Bacillaceae</taxon>
        <taxon>Bacillus</taxon>
        <taxon>Bacillus cereus group</taxon>
    </lineage>
</organism>
<name>GLYA_BACC3</name>
<evidence type="ECO:0000255" key="1">
    <source>
        <dbReference type="HAMAP-Rule" id="MF_00051"/>
    </source>
</evidence>
<gene>
    <name evidence="1" type="primary">glyA</name>
    <name type="ordered locus">BCA_5461</name>
</gene>
<sequence length="413" mass="45164">MDHLKRQDEKVFAAIEAELGRQRSKIELIASENFVSEAVMEAQGSVLTNKYAEGYPGKRYYGGCEHVDVVEDIARDRVKEIFGAEHVNVQPHSGAQANMAVYFTILEQGDTVLGMNLSHGGHLTHGSPVNFSGVQYNFVEYGVDAESHRINYDDVLAKAKEHKPKLIVAGASAYPRVIDFKRFREIADEVGAYLMVDMAHIAGLVAAGLHPNPVPHAHFVTTTTHKTLRGPRGGMILCEEQFAKQIDKSIFPGIQGGPLMHVIAAKAVAFGEALQDDFKTYAQNIINNANRLAEGLQKEGLTLVSGGTDNHLILIDVRNLEITGKVAEHVLDEVGITVNKNTIPFETASPFVTSGVRIGTAAVTSRGFGLEDMDEIASLIAYTLKNHENEAALEEARKRVEALTSKFPMYTDL</sequence>
<protein>
    <recommendedName>
        <fullName evidence="1">Serine hydroxymethyltransferase</fullName>
        <shortName evidence="1">SHMT</shortName>
        <shortName evidence="1">Serine methylase</shortName>
        <ecNumber evidence="1">2.1.2.1</ecNumber>
    </recommendedName>
</protein>
<dbReference type="EC" id="2.1.2.1" evidence="1"/>
<dbReference type="EMBL" id="CP001407">
    <property type="protein sequence ID" value="ACO26272.1"/>
    <property type="molecule type" value="Genomic_DNA"/>
</dbReference>
<dbReference type="RefSeq" id="WP_000349816.1">
    <property type="nucleotide sequence ID" value="NZ_CP009318.1"/>
</dbReference>
<dbReference type="SMR" id="C1F0N9"/>
<dbReference type="GeneID" id="93005807"/>
<dbReference type="KEGG" id="bcx:BCA_5461"/>
<dbReference type="PATRIC" id="fig|572264.18.peg.5383"/>
<dbReference type="UniPathway" id="UPA00193"/>
<dbReference type="UniPathway" id="UPA00288">
    <property type="reaction ID" value="UER01023"/>
</dbReference>
<dbReference type="Proteomes" id="UP000002210">
    <property type="component" value="Chromosome"/>
</dbReference>
<dbReference type="GO" id="GO:0005829">
    <property type="term" value="C:cytosol"/>
    <property type="evidence" value="ECO:0007669"/>
    <property type="project" value="TreeGrafter"/>
</dbReference>
<dbReference type="GO" id="GO:0004372">
    <property type="term" value="F:glycine hydroxymethyltransferase activity"/>
    <property type="evidence" value="ECO:0007669"/>
    <property type="project" value="UniProtKB-UniRule"/>
</dbReference>
<dbReference type="GO" id="GO:0030170">
    <property type="term" value="F:pyridoxal phosphate binding"/>
    <property type="evidence" value="ECO:0007669"/>
    <property type="project" value="UniProtKB-UniRule"/>
</dbReference>
<dbReference type="GO" id="GO:0019264">
    <property type="term" value="P:glycine biosynthetic process from serine"/>
    <property type="evidence" value="ECO:0007669"/>
    <property type="project" value="UniProtKB-UniRule"/>
</dbReference>
<dbReference type="GO" id="GO:0035999">
    <property type="term" value="P:tetrahydrofolate interconversion"/>
    <property type="evidence" value="ECO:0007669"/>
    <property type="project" value="UniProtKB-UniRule"/>
</dbReference>
<dbReference type="CDD" id="cd00378">
    <property type="entry name" value="SHMT"/>
    <property type="match status" value="1"/>
</dbReference>
<dbReference type="FunFam" id="3.40.640.10:FF:000001">
    <property type="entry name" value="Serine hydroxymethyltransferase"/>
    <property type="match status" value="1"/>
</dbReference>
<dbReference type="FunFam" id="3.90.1150.10:FF:000003">
    <property type="entry name" value="Serine hydroxymethyltransferase"/>
    <property type="match status" value="1"/>
</dbReference>
<dbReference type="Gene3D" id="3.90.1150.10">
    <property type="entry name" value="Aspartate Aminotransferase, domain 1"/>
    <property type="match status" value="1"/>
</dbReference>
<dbReference type="Gene3D" id="3.40.640.10">
    <property type="entry name" value="Type I PLP-dependent aspartate aminotransferase-like (Major domain)"/>
    <property type="match status" value="1"/>
</dbReference>
<dbReference type="HAMAP" id="MF_00051">
    <property type="entry name" value="SHMT"/>
    <property type="match status" value="1"/>
</dbReference>
<dbReference type="InterPro" id="IPR015424">
    <property type="entry name" value="PyrdxlP-dep_Trfase"/>
</dbReference>
<dbReference type="InterPro" id="IPR015421">
    <property type="entry name" value="PyrdxlP-dep_Trfase_major"/>
</dbReference>
<dbReference type="InterPro" id="IPR015422">
    <property type="entry name" value="PyrdxlP-dep_Trfase_small"/>
</dbReference>
<dbReference type="InterPro" id="IPR001085">
    <property type="entry name" value="Ser_HO-MeTrfase"/>
</dbReference>
<dbReference type="InterPro" id="IPR049943">
    <property type="entry name" value="Ser_HO-MeTrfase-like"/>
</dbReference>
<dbReference type="InterPro" id="IPR019798">
    <property type="entry name" value="Ser_HO-MeTrfase_PLP_BS"/>
</dbReference>
<dbReference type="InterPro" id="IPR039429">
    <property type="entry name" value="SHMT-like_dom"/>
</dbReference>
<dbReference type="NCBIfam" id="NF000586">
    <property type="entry name" value="PRK00011.1"/>
    <property type="match status" value="1"/>
</dbReference>
<dbReference type="PANTHER" id="PTHR11680">
    <property type="entry name" value="SERINE HYDROXYMETHYLTRANSFERASE"/>
    <property type="match status" value="1"/>
</dbReference>
<dbReference type="PANTHER" id="PTHR11680:SF35">
    <property type="entry name" value="SERINE HYDROXYMETHYLTRANSFERASE 1"/>
    <property type="match status" value="1"/>
</dbReference>
<dbReference type="Pfam" id="PF00464">
    <property type="entry name" value="SHMT"/>
    <property type="match status" value="1"/>
</dbReference>
<dbReference type="PIRSF" id="PIRSF000412">
    <property type="entry name" value="SHMT"/>
    <property type="match status" value="1"/>
</dbReference>
<dbReference type="SUPFAM" id="SSF53383">
    <property type="entry name" value="PLP-dependent transferases"/>
    <property type="match status" value="1"/>
</dbReference>
<dbReference type="PROSITE" id="PS00096">
    <property type="entry name" value="SHMT"/>
    <property type="match status" value="1"/>
</dbReference>
<keyword id="KW-0028">Amino-acid biosynthesis</keyword>
<keyword id="KW-0963">Cytoplasm</keyword>
<keyword id="KW-0554">One-carbon metabolism</keyword>
<keyword id="KW-0663">Pyridoxal phosphate</keyword>
<keyword id="KW-0808">Transferase</keyword>
<accession>C1F0N9</accession>
<reference key="1">
    <citation type="submission" date="2009-02" db="EMBL/GenBank/DDBJ databases">
        <title>Genome sequence of Bacillus cereus 03BB102.</title>
        <authorList>
            <person name="Dodson R.J."/>
            <person name="Jackson P."/>
            <person name="Munk A.C."/>
            <person name="Brettin T."/>
            <person name="Bruce D."/>
            <person name="Detter C."/>
            <person name="Tapia R."/>
            <person name="Han C."/>
            <person name="Sutton G."/>
            <person name="Sims D."/>
        </authorList>
    </citation>
    <scope>NUCLEOTIDE SEQUENCE [LARGE SCALE GENOMIC DNA]</scope>
    <source>
        <strain>03BB102</strain>
    </source>
</reference>
<comment type="function">
    <text evidence="1">Catalyzes the reversible interconversion of serine and glycine with tetrahydrofolate (THF) serving as the one-carbon carrier. This reaction serves as the major source of one-carbon groups required for the biosynthesis of purines, thymidylate, methionine, and other important biomolecules. Also exhibits THF-independent aldolase activity toward beta-hydroxyamino acids, producing glycine and aldehydes, via a retro-aldol mechanism.</text>
</comment>
<comment type="catalytic activity">
    <reaction evidence="1">
        <text>(6R)-5,10-methylene-5,6,7,8-tetrahydrofolate + glycine + H2O = (6S)-5,6,7,8-tetrahydrofolate + L-serine</text>
        <dbReference type="Rhea" id="RHEA:15481"/>
        <dbReference type="ChEBI" id="CHEBI:15377"/>
        <dbReference type="ChEBI" id="CHEBI:15636"/>
        <dbReference type="ChEBI" id="CHEBI:33384"/>
        <dbReference type="ChEBI" id="CHEBI:57305"/>
        <dbReference type="ChEBI" id="CHEBI:57453"/>
        <dbReference type="EC" id="2.1.2.1"/>
    </reaction>
</comment>
<comment type="cofactor">
    <cofactor evidence="1">
        <name>pyridoxal 5'-phosphate</name>
        <dbReference type="ChEBI" id="CHEBI:597326"/>
    </cofactor>
</comment>
<comment type="pathway">
    <text evidence="1">One-carbon metabolism; tetrahydrofolate interconversion.</text>
</comment>
<comment type="pathway">
    <text evidence="1">Amino-acid biosynthesis; glycine biosynthesis; glycine from L-serine: step 1/1.</text>
</comment>
<comment type="subunit">
    <text evidence="1">Homodimer.</text>
</comment>
<comment type="subcellular location">
    <subcellularLocation>
        <location evidence="1">Cytoplasm</location>
    </subcellularLocation>
</comment>
<comment type="similarity">
    <text evidence="1">Belongs to the SHMT family.</text>
</comment>
<proteinExistence type="inferred from homology"/>